<protein>
    <recommendedName>
        <fullName evidence="1">UPF0434 protein Tola_2233</fullName>
    </recommendedName>
</protein>
<feature type="chain" id="PRO_1000213787" description="UPF0434 protein Tola_2233">
    <location>
        <begin position="1"/>
        <end position="62"/>
    </location>
</feature>
<organism>
    <name type="scientific">Tolumonas auensis (strain DSM 9187 / NBRC 110442 / TA 4)</name>
    <dbReference type="NCBI Taxonomy" id="595494"/>
    <lineage>
        <taxon>Bacteria</taxon>
        <taxon>Pseudomonadati</taxon>
        <taxon>Pseudomonadota</taxon>
        <taxon>Gammaproteobacteria</taxon>
        <taxon>Aeromonadales</taxon>
        <taxon>Aeromonadaceae</taxon>
        <taxon>Tolumonas</taxon>
    </lineage>
</organism>
<accession>C4L8W1</accession>
<gene>
    <name type="ordered locus">Tola_2233</name>
</gene>
<sequence length="62" mass="7144">MALDYKLLEIVACPICKGKLNYDKERSELVCRADKLAYPVEDDIPVLLENRARPLKEEELPL</sequence>
<proteinExistence type="inferred from homology"/>
<reference key="1">
    <citation type="submission" date="2009-05" db="EMBL/GenBank/DDBJ databases">
        <title>Complete sequence of Tolumonas auensis DSM 9187.</title>
        <authorList>
            <consortium name="US DOE Joint Genome Institute"/>
            <person name="Lucas S."/>
            <person name="Copeland A."/>
            <person name="Lapidus A."/>
            <person name="Glavina del Rio T."/>
            <person name="Tice H."/>
            <person name="Bruce D."/>
            <person name="Goodwin L."/>
            <person name="Pitluck S."/>
            <person name="Chertkov O."/>
            <person name="Brettin T."/>
            <person name="Detter J.C."/>
            <person name="Han C."/>
            <person name="Larimer F."/>
            <person name="Land M."/>
            <person name="Hauser L."/>
            <person name="Kyrpides N."/>
            <person name="Mikhailova N."/>
            <person name="Spring S."/>
            <person name="Beller H."/>
        </authorList>
    </citation>
    <scope>NUCLEOTIDE SEQUENCE [LARGE SCALE GENOMIC DNA]</scope>
    <source>
        <strain>DSM 9187 / NBRC 110442 / TA 4</strain>
    </source>
</reference>
<comment type="similarity">
    <text evidence="1">Belongs to the UPF0434 family.</text>
</comment>
<name>Y2233_TOLAT</name>
<evidence type="ECO:0000255" key="1">
    <source>
        <dbReference type="HAMAP-Rule" id="MF_01187"/>
    </source>
</evidence>
<keyword id="KW-1185">Reference proteome</keyword>
<dbReference type="EMBL" id="CP001616">
    <property type="protein sequence ID" value="ACQ93831.1"/>
    <property type="molecule type" value="Genomic_DNA"/>
</dbReference>
<dbReference type="RefSeq" id="WP_015879299.1">
    <property type="nucleotide sequence ID" value="NC_012691.1"/>
</dbReference>
<dbReference type="SMR" id="C4L8W1"/>
<dbReference type="STRING" id="595494.Tola_2233"/>
<dbReference type="KEGG" id="tau:Tola_2233"/>
<dbReference type="eggNOG" id="COG2835">
    <property type="taxonomic scope" value="Bacteria"/>
</dbReference>
<dbReference type="HOGENOM" id="CLU_155659_3_1_6"/>
<dbReference type="OrthoDB" id="9812205at2"/>
<dbReference type="Proteomes" id="UP000009073">
    <property type="component" value="Chromosome"/>
</dbReference>
<dbReference type="GO" id="GO:0005829">
    <property type="term" value="C:cytosol"/>
    <property type="evidence" value="ECO:0007669"/>
    <property type="project" value="TreeGrafter"/>
</dbReference>
<dbReference type="FunFam" id="2.20.25.10:FF:000002">
    <property type="entry name" value="UPF0434 protein YcaR"/>
    <property type="match status" value="1"/>
</dbReference>
<dbReference type="Gene3D" id="2.20.25.10">
    <property type="match status" value="1"/>
</dbReference>
<dbReference type="HAMAP" id="MF_01187">
    <property type="entry name" value="UPF0434"/>
    <property type="match status" value="1"/>
</dbReference>
<dbReference type="InterPro" id="IPR005651">
    <property type="entry name" value="Trm112-like"/>
</dbReference>
<dbReference type="PANTHER" id="PTHR33505:SF4">
    <property type="entry name" value="PROTEIN PREY, MITOCHONDRIAL"/>
    <property type="match status" value="1"/>
</dbReference>
<dbReference type="PANTHER" id="PTHR33505">
    <property type="entry name" value="ZGC:162634"/>
    <property type="match status" value="1"/>
</dbReference>
<dbReference type="Pfam" id="PF03966">
    <property type="entry name" value="Trm112p"/>
    <property type="match status" value="1"/>
</dbReference>
<dbReference type="SUPFAM" id="SSF158997">
    <property type="entry name" value="Trm112p-like"/>
    <property type="match status" value="1"/>
</dbReference>